<name>PDXJ_CHLPD</name>
<dbReference type="EC" id="2.6.99.2" evidence="1"/>
<dbReference type="EMBL" id="CP000492">
    <property type="protein sequence ID" value="ABL64722.1"/>
    <property type="molecule type" value="Genomic_DNA"/>
</dbReference>
<dbReference type="RefSeq" id="WP_011744552.1">
    <property type="nucleotide sequence ID" value="NC_008639.1"/>
</dbReference>
<dbReference type="SMR" id="A1BE95"/>
<dbReference type="STRING" id="290317.Cpha266_0667"/>
<dbReference type="KEGG" id="cph:Cpha266_0667"/>
<dbReference type="eggNOG" id="COG0854">
    <property type="taxonomic scope" value="Bacteria"/>
</dbReference>
<dbReference type="HOGENOM" id="CLU_074563_0_0_10"/>
<dbReference type="OrthoDB" id="9806590at2"/>
<dbReference type="UniPathway" id="UPA00244">
    <property type="reaction ID" value="UER00313"/>
</dbReference>
<dbReference type="Proteomes" id="UP000008701">
    <property type="component" value="Chromosome"/>
</dbReference>
<dbReference type="GO" id="GO:0005829">
    <property type="term" value="C:cytosol"/>
    <property type="evidence" value="ECO:0007669"/>
    <property type="project" value="TreeGrafter"/>
</dbReference>
<dbReference type="GO" id="GO:0033856">
    <property type="term" value="F:pyridoxine 5'-phosphate synthase activity"/>
    <property type="evidence" value="ECO:0007669"/>
    <property type="project" value="UniProtKB-EC"/>
</dbReference>
<dbReference type="GO" id="GO:0008615">
    <property type="term" value="P:pyridoxine biosynthetic process"/>
    <property type="evidence" value="ECO:0007669"/>
    <property type="project" value="UniProtKB-UniRule"/>
</dbReference>
<dbReference type="CDD" id="cd00003">
    <property type="entry name" value="PNPsynthase"/>
    <property type="match status" value="1"/>
</dbReference>
<dbReference type="Gene3D" id="3.20.20.70">
    <property type="entry name" value="Aldolase class I"/>
    <property type="match status" value="1"/>
</dbReference>
<dbReference type="HAMAP" id="MF_00279">
    <property type="entry name" value="PdxJ"/>
    <property type="match status" value="1"/>
</dbReference>
<dbReference type="InterPro" id="IPR013785">
    <property type="entry name" value="Aldolase_TIM"/>
</dbReference>
<dbReference type="InterPro" id="IPR004569">
    <property type="entry name" value="PyrdxlP_synth_PdxJ"/>
</dbReference>
<dbReference type="InterPro" id="IPR036130">
    <property type="entry name" value="Pyridoxine-5'_phos_synth"/>
</dbReference>
<dbReference type="NCBIfam" id="TIGR00559">
    <property type="entry name" value="pdxJ"/>
    <property type="match status" value="1"/>
</dbReference>
<dbReference type="NCBIfam" id="NF003625">
    <property type="entry name" value="PRK05265.1-3"/>
    <property type="match status" value="1"/>
</dbReference>
<dbReference type="NCBIfam" id="NF003627">
    <property type="entry name" value="PRK05265.1-5"/>
    <property type="match status" value="1"/>
</dbReference>
<dbReference type="PANTHER" id="PTHR30456">
    <property type="entry name" value="PYRIDOXINE 5'-PHOSPHATE SYNTHASE"/>
    <property type="match status" value="1"/>
</dbReference>
<dbReference type="PANTHER" id="PTHR30456:SF0">
    <property type="entry name" value="PYRIDOXINE 5'-PHOSPHATE SYNTHASE"/>
    <property type="match status" value="1"/>
</dbReference>
<dbReference type="Pfam" id="PF03740">
    <property type="entry name" value="PdxJ"/>
    <property type="match status" value="1"/>
</dbReference>
<dbReference type="SUPFAM" id="SSF63892">
    <property type="entry name" value="Pyridoxine 5'-phosphate synthase"/>
    <property type="match status" value="1"/>
</dbReference>
<sequence length="236" mass="26310">MRLAVNIDHIATLRNARGEQEPDPVAAALLAERCGAAGIVCHLREDRRHIKDLDLARLREAVTTKLDLEMAMTGELQEIALKTKPELITLVPEKREELTTEGGFDVARHFAVLKEFLKPLNDNGIEVSLFIEPEKKAVDLAREAGADLVELHTGLYAQKELENNTDLELQRIREAATYAKSIGLRVVAGHGLNYRNIGPFREIPEIEEVSIGHAIIARAVFTGLDEAVREMLRLIQ</sequence>
<keyword id="KW-0963">Cytoplasm</keyword>
<keyword id="KW-0664">Pyridoxine biosynthesis</keyword>
<keyword id="KW-1185">Reference proteome</keyword>
<keyword id="KW-0808">Transferase</keyword>
<proteinExistence type="inferred from homology"/>
<organism>
    <name type="scientific">Chlorobium phaeobacteroides (strain DSM 266 / SMG 266 / 2430)</name>
    <dbReference type="NCBI Taxonomy" id="290317"/>
    <lineage>
        <taxon>Bacteria</taxon>
        <taxon>Pseudomonadati</taxon>
        <taxon>Chlorobiota</taxon>
        <taxon>Chlorobiia</taxon>
        <taxon>Chlorobiales</taxon>
        <taxon>Chlorobiaceae</taxon>
        <taxon>Chlorobium/Pelodictyon group</taxon>
        <taxon>Chlorobium</taxon>
    </lineage>
</organism>
<evidence type="ECO:0000255" key="1">
    <source>
        <dbReference type="HAMAP-Rule" id="MF_00279"/>
    </source>
</evidence>
<feature type="chain" id="PRO_1000022369" description="Pyridoxine 5'-phosphate synthase">
    <location>
        <begin position="1"/>
        <end position="236"/>
    </location>
</feature>
<feature type="active site" description="Proton acceptor" evidence="1">
    <location>
        <position position="42"/>
    </location>
</feature>
<feature type="active site" description="Proton acceptor" evidence="1">
    <location>
        <position position="69"/>
    </location>
</feature>
<feature type="active site" description="Proton donor" evidence="1">
    <location>
        <position position="190"/>
    </location>
</feature>
<feature type="binding site" evidence="1">
    <location>
        <position position="6"/>
    </location>
    <ligand>
        <name>3-amino-2-oxopropyl phosphate</name>
        <dbReference type="ChEBI" id="CHEBI:57279"/>
    </ligand>
</feature>
<feature type="binding site" evidence="1">
    <location>
        <begin position="8"/>
        <end position="9"/>
    </location>
    <ligand>
        <name>1-deoxy-D-xylulose 5-phosphate</name>
        <dbReference type="ChEBI" id="CHEBI:57792"/>
    </ligand>
</feature>
<feature type="binding site" evidence="1">
    <location>
        <position position="17"/>
    </location>
    <ligand>
        <name>3-amino-2-oxopropyl phosphate</name>
        <dbReference type="ChEBI" id="CHEBI:57279"/>
    </ligand>
</feature>
<feature type="binding site" evidence="1">
    <location>
        <position position="44"/>
    </location>
    <ligand>
        <name>1-deoxy-D-xylulose 5-phosphate</name>
        <dbReference type="ChEBI" id="CHEBI:57792"/>
    </ligand>
</feature>
<feature type="binding site" evidence="1">
    <location>
        <position position="49"/>
    </location>
    <ligand>
        <name>1-deoxy-D-xylulose 5-phosphate</name>
        <dbReference type="ChEBI" id="CHEBI:57792"/>
    </ligand>
</feature>
<feature type="binding site" evidence="1">
    <location>
        <position position="99"/>
    </location>
    <ligand>
        <name>1-deoxy-D-xylulose 5-phosphate</name>
        <dbReference type="ChEBI" id="CHEBI:57792"/>
    </ligand>
</feature>
<feature type="binding site" evidence="1">
    <location>
        <position position="191"/>
    </location>
    <ligand>
        <name>3-amino-2-oxopropyl phosphate</name>
        <dbReference type="ChEBI" id="CHEBI:57279"/>
    </ligand>
</feature>
<feature type="binding site" evidence="1">
    <location>
        <begin position="212"/>
        <end position="213"/>
    </location>
    <ligand>
        <name>3-amino-2-oxopropyl phosphate</name>
        <dbReference type="ChEBI" id="CHEBI:57279"/>
    </ligand>
</feature>
<feature type="site" description="Transition state stabilizer" evidence="1">
    <location>
        <position position="150"/>
    </location>
</feature>
<reference key="1">
    <citation type="submission" date="2006-12" db="EMBL/GenBank/DDBJ databases">
        <title>Complete sequence of Chlorobium phaeobacteroides DSM 266.</title>
        <authorList>
            <consortium name="US DOE Joint Genome Institute"/>
            <person name="Copeland A."/>
            <person name="Lucas S."/>
            <person name="Lapidus A."/>
            <person name="Barry K."/>
            <person name="Detter J.C."/>
            <person name="Glavina del Rio T."/>
            <person name="Hammon N."/>
            <person name="Israni S."/>
            <person name="Pitluck S."/>
            <person name="Goltsman E."/>
            <person name="Schmutz J."/>
            <person name="Larimer F."/>
            <person name="Land M."/>
            <person name="Hauser L."/>
            <person name="Mikhailova N."/>
            <person name="Li T."/>
            <person name="Overmann J."/>
            <person name="Bryant D.A."/>
            <person name="Richardson P."/>
        </authorList>
    </citation>
    <scope>NUCLEOTIDE SEQUENCE [LARGE SCALE GENOMIC DNA]</scope>
    <source>
        <strain>DSM 266 / SMG 266 / 2430</strain>
    </source>
</reference>
<protein>
    <recommendedName>
        <fullName evidence="1">Pyridoxine 5'-phosphate synthase</fullName>
        <shortName evidence="1">PNP synthase</shortName>
        <ecNumber evidence="1">2.6.99.2</ecNumber>
    </recommendedName>
</protein>
<accession>A1BE95</accession>
<gene>
    <name evidence="1" type="primary">pdxJ</name>
    <name type="ordered locus">Cpha266_0667</name>
</gene>
<comment type="function">
    <text evidence="1">Catalyzes the complicated ring closure reaction between the two acyclic compounds 1-deoxy-D-xylulose-5-phosphate (DXP) and 3-amino-2-oxopropyl phosphate (1-amino-acetone-3-phosphate or AAP) to form pyridoxine 5'-phosphate (PNP) and inorganic phosphate.</text>
</comment>
<comment type="catalytic activity">
    <reaction evidence="1">
        <text>3-amino-2-oxopropyl phosphate + 1-deoxy-D-xylulose 5-phosphate = pyridoxine 5'-phosphate + phosphate + 2 H2O + H(+)</text>
        <dbReference type="Rhea" id="RHEA:15265"/>
        <dbReference type="ChEBI" id="CHEBI:15377"/>
        <dbReference type="ChEBI" id="CHEBI:15378"/>
        <dbReference type="ChEBI" id="CHEBI:43474"/>
        <dbReference type="ChEBI" id="CHEBI:57279"/>
        <dbReference type="ChEBI" id="CHEBI:57792"/>
        <dbReference type="ChEBI" id="CHEBI:58589"/>
        <dbReference type="EC" id="2.6.99.2"/>
    </reaction>
</comment>
<comment type="pathway">
    <text evidence="1">Cofactor biosynthesis; pyridoxine 5'-phosphate biosynthesis; pyridoxine 5'-phosphate from D-erythrose 4-phosphate: step 5/5.</text>
</comment>
<comment type="subunit">
    <text evidence="1">Homooctamer; tetramer of dimers.</text>
</comment>
<comment type="subcellular location">
    <subcellularLocation>
        <location evidence="1">Cytoplasm</location>
    </subcellularLocation>
</comment>
<comment type="similarity">
    <text evidence="1">Belongs to the PNP synthase family.</text>
</comment>